<sequence>MSTTFQLDTSTSRANPTPAPMKRLTIPAIRQRKKDGVTAQPVVMLTAYTARQAQLLDAHCDLLLVGDSLGQVIYGLPSSVPVTLDMMAAHGAAVVRGSYHAAVVVDMPFGSYEASPQQAFESASRLLKETGCAAVKLEGGEAMAETVAFLTNRGIPVMGHVGLTPQAVNVLGGYNARGRSEAEAAKIVGDARSLADAGAFAIVIEGVVEPIAIAITQAVACPTIGIGASAQCDGQVLVTEDMLGMFERVPRFVKIYEDLAGTISGAAARYADEVRARTFPGIEQTYQPK</sequence>
<proteinExistence type="inferred from homology"/>
<gene>
    <name evidence="1" type="primary">panB</name>
    <name type="ordered locus">Saro_2043</name>
</gene>
<dbReference type="EC" id="2.1.2.11" evidence="1"/>
<dbReference type="EMBL" id="CP000248">
    <property type="protein sequence ID" value="ABD26482.1"/>
    <property type="molecule type" value="Genomic_DNA"/>
</dbReference>
<dbReference type="RefSeq" id="WP_011445691.1">
    <property type="nucleotide sequence ID" value="NC_007794.1"/>
</dbReference>
<dbReference type="SMR" id="Q2G6P1"/>
<dbReference type="STRING" id="279238.Saro_2043"/>
<dbReference type="KEGG" id="nar:Saro_2043"/>
<dbReference type="eggNOG" id="COG0413">
    <property type="taxonomic scope" value="Bacteria"/>
</dbReference>
<dbReference type="HOGENOM" id="CLU_036645_1_0_5"/>
<dbReference type="UniPathway" id="UPA00028">
    <property type="reaction ID" value="UER00003"/>
</dbReference>
<dbReference type="Proteomes" id="UP000009134">
    <property type="component" value="Chromosome"/>
</dbReference>
<dbReference type="GO" id="GO:0005737">
    <property type="term" value="C:cytoplasm"/>
    <property type="evidence" value="ECO:0007669"/>
    <property type="project" value="UniProtKB-SubCell"/>
</dbReference>
<dbReference type="GO" id="GO:0003864">
    <property type="term" value="F:3-methyl-2-oxobutanoate hydroxymethyltransferase activity"/>
    <property type="evidence" value="ECO:0007669"/>
    <property type="project" value="UniProtKB-UniRule"/>
</dbReference>
<dbReference type="GO" id="GO:0000287">
    <property type="term" value="F:magnesium ion binding"/>
    <property type="evidence" value="ECO:0007669"/>
    <property type="project" value="TreeGrafter"/>
</dbReference>
<dbReference type="GO" id="GO:0015940">
    <property type="term" value="P:pantothenate biosynthetic process"/>
    <property type="evidence" value="ECO:0007669"/>
    <property type="project" value="UniProtKB-UniRule"/>
</dbReference>
<dbReference type="CDD" id="cd06557">
    <property type="entry name" value="KPHMT-like"/>
    <property type="match status" value="1"/>
</dbReference>
<dbReference type="FunFam" id="3.20.20.60:FF:000003">
    <property type="entry name" value="3-methyl-2-oxobutanoate hydroxymethyltransferase"/>
    <property type="match status" value="1"/>
</dbReference>
<dbReference type="Gene3D" id="3.20.20.60">
    <property type="entry name" value="Phosphoenolpyruvate-binding domains"/>
    <property type="match status" value="1"/>
</dbReference>
<dbReference type="HAMAP" id="MF_00156">
    <property type="entry name" value="PanB"/>
    <property type="match status" value="1"/>
</dbReference>
<dbReference type="InterPro" id="IPR003700">
    <property type="entry name" value="Pantoate_hydroxy_MeTrfase"/>
</dbReference>
<dbReference type="InterPro" id="IPR015813">
    <property type="entry name" value="Pyrv/PenolPyrv_kinase-like_dom"/>
</dbReference>
<dbReference type="InterPro" id="IPR040442">
    <property type="entry name" value="Pyrv_kinase-like_dom_sf"/>
</dbReference>
<dbReference type="NCBIfam" id="TIGR00222">
    <property type="entry name" value="panB"/>
    <property type="match status" value="1"/>
</dbReference>
<dbReference type="NCBIfam" id="NF001452">
    <property type="entry name" value="PRK00311.1"/>
    <property type="match status" value="1"/>
</dbReference>
<dbReference type="PANTHER" id="PTHR20881">
    <property type="entry name" value="3-METHYL-2-OXOBUTANOATE HYDROXYMETHYLTRANSFERASE"/>
    <property type="match status" value="1"/>
</dbReference>
<dbReference type="PANTHER" id="PTHR20881:SF0">
    <property type="entry name" value="3-METHYL-2-OXOBUTANOATE HYDROXYMETHYLTRANSFERASE"/>
    <property type="match status" value="1"/>
</dbReference>
<dbReference type="Pfam" id="PF02548">
    <property type="entry name" value="Pantoate_transf"/>
    <property type="match status" value="1"/>
</dbReference>
<dbReference type="PIRSF" id="PIRSF000388">
    <property type="entry name" value="Pantoate_hydroxy_MeTrfase"/>
    <property type="match status" value="1"/>
</dbReference>
<dbReference type="SUPFAM" id="SSF51621">
    <property type="entry name" value="Phosphoenolpyruvate/pyruvate domain"/>
    <property type="match status" value="1"/>
</dbReference>
<protein>
    <recommendedName>
        <fullName evidence="1">3-methyl-2-oxobutanoate hydroxymethyltransferase</fullName>
        <ecNumber evidence="1">2.1.2.11</ecNumber>
    </recommendedName>
    <alternativeName>
        <fullName evidence="1">Ketopantoate hydroxymethyltransferase</fullName>
        <shortName evidence="1">KPHMT</shortName>
    </alternativeName>
</protein>
<evidence type="ECO:0000255" key="1">
    <source>
        <dbReference type="HAMAP-Rule" id="MF_00156"/>
    </source>
</evidence>
<evidence type="ECO:0000256" key="2">
    <source>
        <dbReference type="SAM" id="MobiDB-lite"/>
    </source>
</evidence>
<reference key="1">
    <citation type="submission" date="2006-01" db="EMBL/GenBank/DDBJ databases">
        <title>Complete sequence of Novosphingobium aromaticivorans DSM 12444.</title>
        <authorList>
            <consortium name="US DOE Joint Genome Institute"/>
            <person name="Copeland A."/>
            <person name="Lucas S."/>
            <person name="Lapidus A."/>
            <person name="Barry K."/>
            <person name="Detter J.C."/>
            <person name="Glavina T."/>
            <person name="Hammon N."/>
            <person name="Israni S."/>
            <person name="Pitluck S."/>
            <person name="Chain P."/>
            <person name="Malfatti S."/>
            <person name="Shin M."/>
            <person name="Vergez L."/>
            <person name="Schmutz J."/>
            <person name="Larimer F."/>
            <person name="Land M."/>
            <person name="Kyrpides N."/>
            <person name="Ivanova N."/>
            <person name="Fredrickson J."/>
            <person name="Balkwill D."/>
            <person name="Romine M.F."/>
            <person name="Richardson P."/>
        </authorList>
    </citation>
    <scope>NUCLEOTIDE SEQUENCE [LARGE SCALE GENOMIC DNA]</scope>
    <source>
        <strain>ATCC 700278 / DSM 12444 / CCUG 56034 / CIP 105152 / NBRC 16084 / F199</strain>
    </source>
</reference>
<feature type="chain" id="PRO_0000297313" description="3-methyl-2-oxobutanoate hydroxymethyltransferase">
    <location>
        <begin position="1"/>
        <end position="289"/>
    </location>
</feature>
<feature type="region of interest" description="Disordered" evidence="2">
    <location>
        <begin position="1"/>
        <end position="20"/>
    </location>
</feature>
<feature type="compositionally biased region" description="Polar residues" evidence="2">
    <location>
        <begin position="1"/>
        <end position="15"/>
    </location>
</feature>
<feature type="active site" description="Proton acceptor" evidence="1">
    <location>
        <position position="205"/>
    </location>
</feature>
<feature type="binding site" evidence="1">
    <location>
        <begin position="67"/>
        <end position="68"/>
    </location>
    <ligand>
        <name>3-methyl-2-oxobutanoate</name>
        <dbReference type="ChEBI" id="CHEBI:11851"/>
    </ligand>
</feature>
<feature type="binding site" evidence="1">
    <location>
        <position position="67"/>
    </location>
    <ligand>
        <name>Mg(2+)</name>
        <dbReference type="ChEBI" id="CHEBI:18420"/>
    </ligand>
</feature>
<feature type="binding site" evidence="1">
    <location>
        <position position="106"/>
    </location>
    <ligand>
        <name>3-methyl-2-oxobutanoate</name>
        <dbReference type="ChEBI" id="CHEBI:11851"/>
    </ligand>
</feature>
<feature type="binding site" evidence="1">
    <location>
        <position position="106"/>
    </location>
    <ligand>
        <name>Mg(2+)</name>
        <dbReference type="ChEBI" id="CHEBI:18420"/>
    </ligand>
</feature>
<feature type="binding site" evidence="1">
    <location>
        <position position="136"/>
    </location>
    <ligand>
        <name>3-methyl-2-oxobutanoate</name>
        <dbReference type="ChEBI" id="CHEBI:11851"/>
    </ligand>
</feature>
<feature type="binding site" evidence="1">
    <location>
        <position position="138"/>
    </location>
    <ligand>
        <name>Mg(2+)</name>
        <dbReference type="ChEBI" id="CHEBI:18420"/>
    </ligand>
</feature>
<accession>Q2G6P1</accession>
<keyword id="KW-0963">Cytoplasm</keyword>
<keyword id="KW-0460">Magnesium</keyword>
<keyword id="KW-0479">Metal-binding</keyword>
<keyword id="KW-0566">Pantothenate biosynthesis</keyword>
<keyword id="KW-1185">Reference proteome</keyword>
<keyword id="KW-0808">Transferase</keyword>
<organism>
    <name type="scientific">Novosphingobium aromaticivorans (strain ATCC 700278 / DSM 12444 / CCUG 56034 / CIP 105152 / NBRC 16084 / F199)</name>
    <dbReference type="NCBI Taxonomy" id="279238"/>
    <lineage>
        <taxon>Bacteria</taxon>
        <taxon>Pseudomonadati</taxon>
        <taxon>Pseudomonadota</taxon>
        <taxon>Alphaproteobacteria</taxon>
        <taxon>Sphingomonadales</taxon>
        <taxon>Sphingomonadaceae</taxon>
        <taxon>Novosphingobium</taxon>
    </lineage>
</organism>
<name>PANB_NOVAD</name>
<comment type="function">
    <text evidence="1">Catalyzes the reversible reaction in which hydroxymethyl group from 5,10-methylenetetrahydrofolate is transferred onto alpha-ketoisovalerate to form ketopantoate.</text>
</comment>
<comment type="catalytic activity">
    <reaction evidence="1">
        <text>3-methyl-2-oxobutanoate + (6R)-5,10-methylene-5,6,7,8-tetrahydrofolate + H2O = 2-dehydropantoate + (6S)-5,6,7,8-tetrahydrofolate</text>
        <dbReference type="Rhea" id="RHEA:11824"/>
        <dbReference type="ChEBI" id="CHEBI:11561"/>
        <dbReference type="ChEBI" id="CHEBI:11851"/>
        <dbReference type="ChEBI" id="CHEBI:15377"/>
        <dbReference type="ChEBI" id="CHEBI:15636"/>
        <dbReference type="ChEBI" id="CHEBI:57453"/>
        <dbReference type="EC" id="2.1.2.11"/>
    </reaction>
</comment>
<comment type="cofactor">
    <cofactor evidence="1">
        <name>Mg(2+)</name>
        <dbReference type="ChEBI" id="CHEBI:18420"/>
    </cofactor>
    <text evidence="1">Binds 1 Mg(2+) ion per subunit.</text>
</comment>
<comment type="pathway">
    <text evidence="1">Cofactor biosynthesis; (R)-pantothenate biosynthesis; (R)-pantoate from 3-methyl-2-oxobutanoate: step 1/2.</text>
</comment>
<comment type="subunit">
    <text evidence="1">Homodecamer; pentamer of dimers.</text>
</comment>
<comment type="subcellular location">
    <subcellularLocation>
        <location evidence="1">Cytoplasm</location>
    </subcellularLocation>
</comment>
<comment type="similarity">
    <text evidence="1">Belongs to the PanB family.</text>
</comment>